<accession>Q9PKH4</accession>
<evidence type="ECO:0000255" key="1">
    <source>
        <dbReference type="HAMAP-Rule" id="MF_00060"/>
    </source>
</evidence>
<evidence type="ECO:0000305" key="2"/>
<gene>
    <name evidence="1" type="primary">surE</name>
    <name type="ordered locus">TC_0491</name>
</gene>
<keyword id="KW-0963">Cytoplasm</keyword>
<keyword id="KW-0378">Hydrolase</keyword>
<keyword id="KW-0479">Metal-binding</keyword>
<keyword id="KW-0547">Nucleotide-binding</keyword>
<organism>
    <name type="scientific">Chlamydia muridarum (strain MoPn / Nigg)</name>
    <dbReference type="NCBI Taxonomy" id="243161"/>
    <lineage>
        <taxon>Bacteria</taxon>
        <taxon>Pseudomonadati</taxon>
        <taxon>Chlamydiota</taxon>
        <taxon>Chlamydiia</taxon>
        <taxon>Chlamydiales</taxon>
        <taxon>Chlamydiaceae</taxon>
        <taxon>Chlamydia/Chlamydophila group</taxon>
        <taxon>Chlamydia</taxon>
    </lineage>
</organism>
<name>SURE_CHLMU</name>
<dbReference type="EC" id="3.1.3.5" evidence="1"/>
<dbReference type="EMBL" id="AE002160">
    <property type="protein sequence ID" value="AAF39336.1"/>
    <property type="status" value="ALT_INIT"/>
    <property type="molecule type" value="Genomic_DNA"/>
</dbReference>
<dbReference type="PIR" id="A81696">
    <property type="entry name" value="A81696"/>
</dbReference>
<dbReference type="RefSeq" id="WP_010230595.1">
    <property type="nucleotide sequence ID" value="NZ_CP063055.1"/>
</dbReference>
<dbReference type="SMR" id="Q9PKH4"/>
<dbReference type="GeneID" id="1245849"/>
<dbReference type="KEGG" id="cmu:TC_0491"/>
<dbReference type="eggNOG" id="COG0496">
    <property type="taxonomic scope" value="Bacteria"/>
</dbReference>
<dbReference type="HOGENOM" id="CLU_045192_1_0_0"/>
<dbReference type="OrthoDB" id="9780815at2"/>
<dbReference type="Proteomes" id="UP000000800">
    <property type="component" value="Chromosome"/>
</dbReference>
<dbReference type="GO" id="GO:0005737">
    <property type="term" value="C:cytoplasm"/>
    <property type="evidence" value="ECO:0007669"/>
    <property type="project" value="UniProtKB-SubCell"/>
</dbReference>
<dbReference type="GO" id="GO:0008254">
    <property type="term" value="F:3'-nucleotidase activity"/>
    <property type="evidence" value="ECO:0007669"/>
    <property type="project" value="TreeGrafter"/>
</dbReference>
<dbReference type="GO" id="GO:0008253">
    <property type="term" value="F:5'-nucleotidase activity"/>
    <property type="evidence" value="ECO:0007669"/>
    <property type="project" value="UniProtKB-UniRule"/>
</dbReference>
<dbReference type="GO" id="GO:0004309">
    <property type="term" value="F:exopolyphosphatase activity"/>
    <property type="evidence" value="ECO:0007669"/>
    <property type="project" value="TreeGrafter"/>
</dbReference>
<dbReference type="GO" id="GO:0046872">
    <property type="term" value="F:metal ion binding"/>
    <property type="evidence" value="ECO:0007669"/>
    <property type="project" value="UniProtKB-UniRule"/>
</dbReference>
<dbReference type="GO" id="GO:0000166">
    <property type="term" value="F:nucleotide binding"/>
    <property type="evidence" value="ECO:0007669"/>
    <property type="project" value="UniProtKB-KW"/>
</dbReference>
<dbReference type="Gene3D" id="3.40.1210.10">
    <property type="entry name" value="Survival protein SurE-like phosphatase/nucleotidase"/>
    <property type="match status" value="1"/>
</dbReference>
<dbReference type="HAMAP" id="MF_00060">
    <property type="entry name" value="SurE"/>
    <property type="match status" value="1"/>
</dbReference>
<dbReference type="InterPro" id="IPR030048">
    <property type="entry name" value="SurE"/>
</dbReference>
<dbReference type="InterPro" id="IPR002828">
    <property type="entry name" value="SurE-like_Pase/nucleotidase"/>
</dbReference>
<dbReference type="InterPro" id="IPR036523">
    <property type="entry name" value="SurE-like_sf"/>
</dbReference>
<dbReference type="NCBIfam" id="NF001493">
    <property type="entry name" value="PRK00346.2-3"/>
    <property type="match status" value="1"/>
</dbReference>
<dbReference type="PANTHER" id="PTHR30457">
    <property type="entry name" value="5'-NUCLEOTIDASE SURE"/>
    <property type="match status" value="1"/>
</dbReference>
<dbReference type="PANTHER" id="PTHR30457:SF12">
    <property type="entry name" value="5'_3'-NUCLEOTIDASE SURE"/>
    <property type="match status" value="1"/>
</dbReference>
<dbReference type="Pfam" id="PF01975">
    <property type="entry name" value="SurE"/>
    <property type="match status" value="1"/>
</dbReference>
<dbReference type="SUPFAM" id="SSF64167">
    <property type="entry name" value="SurE-like"/>
    <property type="match status" value="1"/>
</dbReference>
<reference key="1">
    <citation type="journal article" date="2000" name="Nucleic Acids Res.">
        <title>Genome sequences of Chlamydia trachomatis MoPn and Chlamydia pneumoniae AR39.</title>
        <authorList>
            <person name="Read T.D."/>
            <person name="Brunham R.C."/>
            <person name="Shen C."/>
            <person name="Gill S.R."/>
            <person name="Heidelberg J.F."/>
            <person name="White O."/>
            <person name="Hickey E.K."/>
            <person name="Peterson J.D."/>
            <person name="Utterback T.R."/>
            <person name="Berry K.J."/>
            <person name="Bass S."/>
            <person name="Linher K.D."/>
            <person name="Weidman J.F."/>
            <person name="Khouri H.M."/>
            <person name="Craven B."/>
            <person name="Bowman C."/>
            <person name="Dodson R.J."/>
            <person name="Gwinn M.L."/>
            <person name="Nelson W.C."/>
            <person name="DeBoy R.T."/>
            <person name="Kolonay J.F."/>
            <person name="McClarty G."/>
            <person name="Salzberg S.L."/>
            <person name="Eisen J.A."/>
            <person name="Fraser C.M."/>
        </authorList>
    </citation>
    <scope>NUCLEOTIDE SEQUENCE [LARGE SCALE GENOMIC DNA]</scope>
    <source>
        <strain>MoPn / Nigg</strain>
    </source>
</reference>
<comment type="function">
    <text evidence="1">Nucleotidase that shows phosphatase activity on nucleoside 5'-monophosphates.</text>
</comment>
<comment type="catalytic activity">
    <reaction evidence="1">
        <text>a ribonucleoside 5'-phosphate + H2O = a ribonucleoside + phosphate</text>
        <dbReference type="Rhea" id="RHEA:12484"/>
        <dbReference type="ChEBI" id="CHEBI:15377"/>
        <dbReference type="ChEBI" id="CHEBI:18254"/>
        <dbReference type="ChEBI" id="CHEBI:43474"/>
        <dbReference type="ChEBI" id="CHEBI:58043"/>
        <dbReference type="EC" id="3.1.3.5"/>
    </reaction>
</comment>
<comment type="cofactor">
    <cofactor evidence="1">
        <name>a divalent metal cation</name>
        <dbReference type="ChEBI" id="CHEBI:60240"/>
    </cofactor>
    <text evidence="1">Binds 1 divalent metal cation per subunit.</text>
</comment>
<comment type="subcellular location">
    <subcellularLocation>
        <location evidence="1">Cytoplasm</location>
    </subcellularLocation>
</comment>
<comment type="similarity">
    <text evidence="1">Belongs to the SurE nucleotidase family.</text>
</comment>
<comment type="sequence caution" evidence="2">
    <conflict type="erroneous initiation">
        <sequence resource="EMBL-CDS" id="AAF39336"/>
    </conflict>
</comment>
<protein>
    <recommendedName>
        <fullName evidence="1">5'-nucleotidase SurE</fullName>
        <ecNumber evidence="1">3.1.3.5</ecNumber>
    </recommendedName>
    <alternativeName>
        <fullName evidence="1">Nucleoside 5'-monophosphate phosphohydrolase</fullName>
    </alternativeName>
</protein>
<feature type="chain" id="PRO_0000111801" description="5'-nucleotidase SurE">
    <location>
        <begin position="1"/>
        <end position="283"/>
    </location>
</feature>
<feature type="binding site" evidence="1">
    <location>
        <position position="14"/>
    </location>
    <ligand>
        <name>a divalent metal cation</name>
        <dbReference type="ChEBI" id="CHEBI:60240"/>
    </ligand>
</feature>
<feature type="binding site" evidence="1">
    <location>
        <position position="15"/>
    </location>
    <ligand>
        <name>a divalent metal cation</name>
        <dbReference type="ChEBI" id="CHEBI:60240"/>
    </ligand>
</feature>
<feature type="binding site" evidence="1">
    <location>
        <position position="47"/>
    </location>
    <ligand>
        <name>a divalent metal cation</name>
        <dbReference type="ChEBI" id="CHEBI:60240"/>
    </ligand>
</feature>
<feature type="binding site" evidence="1">
    <location>
        <position position="105"/>
    </location>
    <ligand>
        <name>a divalent metal cation</name>
        <dbReference type="ChEBI" id="CHEBI:60240"/>
    </ligand>
</feature>
<sequence length="283" mass="31374">MTKEPRFKILITNDDGIKAKGISLLVSLLRDANFADLYVVAPLEEQSGRSMAFSLIGPTAVEPFDYPQKVQEAWAVVGTPVDCVKLAIGELFKDNPPDLVLSGINNGKNSGRNLYYSATVGAIREANLHGIPAIALSQCENISFFQEAQMSSLIRALCEFTVSHKHANPLGFNVTFPASSDNSPWKGIRFTLSGDEFLFGIPRLIRTEGNRRYYTLYDMQDKVSEDLSDEYLALANNYITAVPLISKNTPLATLSEEELAFLKESFEQSVQWDSSLNFEEDLA</sequence>
<proteinExistence type="inferred from homology"/>